<organism>
    <name type="scientific">Arabidopsis thaliana</name>
    <name type="common">Mouse-ear cress</name>
    <dbReference type="NCBI Taxonomy" id="3702"/>
    <lineage>
        <taxon>Eukaryota</taxon>
        <taxon>Viridiplantae</taxon>
        <taxon>Streptophyta</taxon>
        <taxon>Embryophyta</taxon>
        <taxon>Tracheophyta</taxon>
        <taxon>Spermatophyta</taxon>
        <taxon>Magnoliopsida</taxon>
        <taxon>eudicotyledons</taxon>
        <taxon>Gunneridae</taxon>
        <taxon>Pentapetalae</taxon>
        <taxon>rosids</taxon>
        <taxon>malvids</taxon>
        <taxon>Brassicales</taxon>
        <taxon>Brassicaceae</taxon>
        <taxon>Camelineae</taxon>
        <taxon>Arabidopsis</taxon>
    </lineage>
</organism>
<name>TSA1_ARATH</name>
<protein>
    <recommendedName>
        <fullName>TSK-associating protein 1</fullName>
    </recommendedName>
</protein>
<proteinExistence type="evidence at protein level"/>
<keyword id="KW-0025">Alternative splicing</keyword>
<keyword id="KW-0175">Coiled coil</keyword>
<keyword id="KW-0963">Cytoplasm</keyword>
<keyword id="KW-0256">Endoplasmic reticulum</keyword>
<keyword id="KW-0539">Nucleus</keyword>
<keyword id="KW-1185">Reference proteome</keyword>
<keyword id="KW-0677">Repeat</keyword>
<keyword id="KW-0732">Signal</keyword>
<comment type="function">
    <text evidence="6 7">Involved in seedling development in the dark. May be involved, when interacting with TSK, in the organization of spindle microtubules and may participate, when interacting with GIP1, in structural links between the nuclear envelope and the cytoskeleton.</text>
</comment>
<comment type="subunit">
    <text evidence="3 6 7">Homomultimer. Interacts (via C-terminal domain) with GIP1, CSN1 (via N-terminal domain) and TSK (via TPR repeats).</text>
</comment>
<comment type="subcellular location">
    <subcellularLocation>
        <location>Endoplasmic reticulum lumen</location>
    </subcellularLocation>
    <subcellularLocation>
        <location evidence="3 7">Nucleus envelope</location>
    </subcellularLocation>
    <subcellularLocation>
        <location evidence="3 7">Cytoplasm</location>
    </subcellularLocation>
    <text evidence="3 7">In interphase, found in ER bodies and at the nuclear envelope (PubMed:24348487). During mitosis, concentrates in limited areas close to the ends of spindle microtubules ahead of separating chromatids (PubMed:15964904).</text>
</comment>
<comment type="alternative products">
    <event type="alternative splicing"/>
    <isoform>
        <id>F4ICX9-1</id>
        <name>1</name>
        <sequence type="displayed"/>
    </isoform>
    <isoform>
        <id>F4ICX9-2</id>
        <name>2</name>
        <sequence type="described" ref="VSP_056759"/>
    </isoform>
</comment>
<comment type="tissue specificity">
    <text evidence="3">Expressed preferentially in flowers and shoot apex.</text>
</comment>
<comment type="induction">
    <text evidence="5">Up-regulated by wounding and jasmonic acid treatment.</text>
</comment>
<comment type="domain">
    <text evidence="4">Contains a N-terminal NAI2 domain (474-759).</text>
</comment>
<comment type="PTM">
    <text>Binds calcium through the EFE repeats.</text>
</comment>
<comment type="sequence caution" evidence="9">
    <conflict type="erroneous gene model prediction">
        <sequence resource="EMBL-CDS" id="AAG51543"/>
    </conflict>
</comment>
<feature type="signal peptide" evidence="1">
    <location>
        <begin position="1"/>
        <end position="29"/>
    </location>
</feature>
<feature type="chain" id="PRO_0000430466" description="TSK-associating protein 1">
    <location>
        <begin position="30"/>
        <end position="759"/>
    </location>
</feature>
<feature type="repeat" description="EFE repeat 1">
    <location>
        <begin position="91"/>
        <end position="138"/>
    </location>
</feature>
<feature type="repeat" description="EFE repeat 2">
    <location>
        <begin position="139"/>
        <end position="176"/>
    </location>
</feature>
<feature type="repeat" description="EFE repeat 3">
    <location>
        <begin position="177"/>
        <end position="215"/>
    </location>
</feature>
<feature type="repeat" description="EFE repeat 4">
    <location>
        <begin position="216"/>
        <end position="254"/>
    </location>
</feature>
<feature type="repeat" description="EFE repeat 5">
    <location>
        <begin position="255"/>
        <end position="293"/>
    </location>
</feature>
<feature type="repeat" description="EFE repeat 6">
    <location>
        <begin position="294"/>
        <end position="329"/>
    </location>
</feature>
<feature type="repeat" description="EFE repeat 7">
    <location>
        <begin position="330"/>
        <end position="368"/>
    </location>
</feature>
<feature type="repeat" description="EFE repeat 8">
    <location>
        <begin position="369"/>
        <end position="407"/>
    </location>
</feature>
<feature type="repeat" description="EFE repeat 9">
    <location>
        <begin position="408"/>
        <end position="443"/>
    </location>
</feature>
<feature type="repeat" description="EFE repeat 10">
    <location>
        <begin position="444"/>
        <end position="473"/>
    </location>
</feature>
<feature type="region of interest" description="Disordered" evidence="2">
    <location>
        <begin position="55"/>
        <end position="74"/>
    </location>
</feature>
<feature type="region of interest" description="10 X approximate EFE repeat">
    <location>
        <begin position="91"/>
        <end position="473"/>
    </location>
</feature>
<feature type="region of interest" description="Disordered" evidence="2">
    <location>
        <begin position="154"/>
        <end position="184"/>
    </location>
</feature>
<feature type="region of interest" description="Disordered" evidence="2">
    <location>
        <begin position="200"/>
        <end position="219"/>
    </location>
</feature>
<feature type="region of interest" description="Disordered" evidence="2">
    <location>
        <begin position="271"/>
        <end position="332"/>
    </location>
</feature>
<feature type="region of interest" description="Disordered" evidence="2">
    <location>
        <begin position="393"/>
        <end position="414"/>
    </location>
</feature>
<feature type="coiled-coil region" evidence="1">
    <location>
        <begin position="142"/>
        <end position="461"/>
    </location>
</feature>
<feature type="coiled-coil region" evidence="1">
    <location>
        <begin position="685"/>
        <end position="734"/>
    </location>
</feature>
<feature type="compositionally biased region" description="Polar residues" evidence="2">
    <location>
        <begin position="63"/>
        <end position="74"/>
    </location>
</feature>
<feature type="splice variant" id="VSP_056759" description="In isoform 2." evidence="8">
    <location>
        <begin position="271"/>
        <end position="274"/>
    </location>
</feature>
<feature type="sequence conflict" description="In Ref. 3; AAK82509/AAO64753." evidence="9" ref="3">
    <original>Q</original>
    <variation>R</variation>
    <location>
        <position position="200"/>
    </location>
</feature>
<sequence>MEIYTMKTNFLVLALSLCILLSSFHEVSCQDDGSGLSNLDLIERDYQDSVNALQGKDDEDQSAKIQSENQNNTTVTDKNTISLSLSDESEVGSVSDESVGRSSLLDQIKLEFEAHHNSINQAGSDGVKAESKDDDEELSAHRQKMLEEIEHEFEAASDSLKQLKTDDVNEGNDEEHSAKRQSLLEEIEREFEAATKELEQLKVNDFTGDKDDEEHSAKRKSMLEAIEREFEAAMEGIEALKVSDSTGSGDDEEQSAKRLSMLEEIEREFEAASKGLEQLRASDSTADNNEEEHAAKGQSLLEEIEREFEAATESLKQLQVDDSTEDKEHFTAAKRQSLLEEIEREFEAATKDLKQLNDFTEGSADDEQSAKRNKMLEDIEREFEAATIGLEQLKANDFSEGNNNEEQSAKRKSMLEEIEREFEAAIGGLKQIKVDDSRNLEEESAKRKIILEEMEREFEEAHSGINAKADKEESAKKQSGSAIPEVLGLGQSGGCSCSKQDEDSSIVIPTKYSIEDILSEESAVQGTETSSLTASLTQLVENHRKEKESLLGHRVLTSPSIASSTSESSATSETVETLRAKLNELRGLTARELVTRKDFGQILITAASFEELSSAPISYISRLAKYRNVIKEGLEASERVHIAQVRAKMLKEVATEKQTAVDTHFATAKKLAQEGDALFVKIFAIKKLLAKLEAEKESVDGKFKETVKELSHLLADASEAYEEYHGAVRKAKDEQAAEEFAKEATQSAEIIWVKFLSSL</sequence>
<dbReference type="EMBL" id="AC037424">
    <property type="protein sequence ID" value="AAG51543.1"/>
    <property type="status" value="ALT_SEQ"/>
    <property type="molecule type" value="Genomic_DNA"/>
</dbReference>
<dbReference type="EMBL" id="CP002684">
    <property type="protein sequence ID" value="AEE32802.1"/>
    <property type="molecule type" value="Genomic_DNA"/>
</dbReference>
<dbReference type="EMBL" id="CP002684">
    <property type="protein sequence ID" value="AEE32803.1"/>
    <property type="molecule type" value="Genomic_DNA"/>
</dbReference>
<dbReference type="EMBL" id="AY048247">
    <property type="protein sequence ID" value="AAK82509.1"/>
    <property type="molecule type" value="mRNA"/>
</dbReference>
<dbReference type="EMBL" id="BT005818">
    <property type="protein sequence ID" value="AAO64753.1"/>
    <property type="molecule type" value="mRNA"/>
</dbReference>
<dbReference type="PIR" id="D96564">
    <property type="entry name" value="D96564"/>
</dbReference>
<dbReference type="RefSeq" id="NP_564607.1">
    <molecule id="F4ICX9-2"/>
    <property type="nucleotide sequence ID" value="NM_104119.3"/>
</dbReference>
<dbReference type="RefSeq" id="NP_849797.1">
    <molecule id="F4ICX9-1"/>
    <property type="nucleotide sequence ID" value="NM_179466.3"/>
</dbReference>
<dbReference type="SMR" id="F4ICX9"/>
<dbReference type="BioGRID" id="26896">
    <property type="interactions" value="3"/>
</dbReference>
<dbReference type="DIP" id="DIP-61420N"/>
<dbReference type="FunCoup" id="F4ICX9">
    <property type="interactions" value="18"/>
</dbReference>
<dbReference type="IntAct" id="F4ICX9">
    <property type="interactions" value="1"/>
</dbReference>
<dbReference type="STRING" id="3702.F4ICX9"/>
<dbReference type="PaxDb" id="3702-AT1G52410.2"/>
<dbReference type="ProMEX" id="F4ICX9"/>
<dbReference type="ProteomicsDB" id="232474">
    <molecule id="F4ICX9-1"/>
</dbReference>
<dbReference type="EnsemblPlants" id="AT1G52410.1">
    <molecule id="F4ICX9-2"/>
    <property type="protein sequence ID" value="AT1G52410.1"/>
    <property type="gene ID" value="AT1G52410"/>
</dbReference>
<dbReference type="EnsemblPlants" id="AT1G52410.2">
    <molecule id="F4ICX9-1"/>
    <property type="protein sequence ID" value="AT1G52410.2"/>
    <property type="gene ID" value="AT1G52410"/>
</dbReference>
<dbReference type="GeneID" id="841671"/>
<dbReference type="Gramene" id="AT1G52410.1">
    <molecule id="F4ICX9-2"/>
    <property type="protein sequence ID" value="AT1G52410.1"/>
    <property type="gene ID" value="AT1G52410"/>
</dbReference>
<dbReference type="Gramene" id="AT1G52410.2">
    <molecule id="F4ICX9-1"/>
    <property type="protein sequence ID" value="AT1G52410.2"/>
    <property type="gene ID" value="AT1G52410"/>
</dbReference>
<dbReference type="KEGG" id="ath:AT1G52410"/>
<dbReference type="Araport" id="AT1G52410"/>
<dbReference type="TAIR" id="AT1G52410">
    <property type="gene designation" value="TSA1"/>
</dbReference>
<dbReference type="InParanoid" id="F4ICX9"/>
<dbReference type="OMA" id="DSHFATA"/>
<dbReference type="PRO" id="PR:F4ICX9"/>
<dbReference type="Proteomes" id="UP000006548">
    <property type="component" value="Chromosome 1"/>
</dbReference>
<dbReference type="ExpressionAtlas" id="F4ICX9">
    <property type="expression patterns" value="baseline and differential"/>
</dbReference>
<dbReference type="GO" id="GO:0009535">
    <property type="term" value="C:chloroplast thylakoid membrane"/>
    <property type="evidence" value="ECO:0007005"/>
    <property type="project" value="TAIR"/>
</dbReference>
<dbReference type="GO" id="GO:0005788">
    <property type="term" value="C:endoplasmic reticulum lumen"/>
    <property type="evidence" value="ECO:0007669"/>
    <property type="project" value="UniProtKB-SubCell"/>
</dbReference>
<dbReference type="GO" id="GO:0005635">
    <property type="term" value="C:nuclear envelope"/>
    <property type="evidence" value="ECO:0007669"/>
    <property type="project" value="UniProtKB-SubCell"/>
</dbReference>
<dbReference type="GO" id="GO:0005777">
    <property type="term" value="C:peroxisome"/>
    <property type="evidence" value="ECO:0000314"/>
    <property type="project" value="TAIR"/>
</dbReference>
<dbReference type="GO" id="GO:0000325">
    <property type="term" value="C:plant-type vacuole"/>
    <property type="evidence" value="ECO:0007005"/>
    <property type="project" value="TAIR"/>
</dbReference>
<dbReference type="GO" id="GO:0099503">
    <property type="term" value="C:secretory vesicle"/>
    <property type="evidence" value="ECO:0007005"/>
    <property type="project" value="TAIR"/>
</dbReference>
<dbReference type="GO" id="GO:0005509">
    <property type="term" value="F:calcium ion binding"/>
    <property type="evidence" value="ECO:0000314"/>
    <property type="project" value="TAIR"/>
</dbReference>
<dbReference type="GO" id="GO:0050832">
    <property type="term" value="P:defense response to fungus"/>
    <property type="evidence" value="ECO:0000270"/>
    <property type="project" value="TAIR"/>
</dbReference>
<dbReference type="GO" id="GO:0009640">
    <property type="term" value="P:photomorphogenesis"/>
    <property type="evidence" value="ECO:0000315"/>
    <property type="project" value="TAIR"/>
</dbReference>
<reference key="1">
    <citation type="journal article" date="2000" name="Nature">
        <title>Sequence and analysis of chromosome 1 of the plant Arabidopsis thaliana.</title>
        <authorList>
            <person name="Theologis A."/>
            <person name="Ecker J.R."/>
            <person name="Palm C.J."/>
            <person name="Federspiel N.A."/>
            <person name="Kaul S."/>
            <person name="White O."/>
            <person name="Alonso J."/>
            <person name="Altafi H."/>
            <person name="Araujo R."/>
            <person name="Bowman C.L."/>
            <person name="Brooks S.Y."/>
            <person name="Buehler E."/>
            <person name="Chan A."/>
            <person name="Chao Q."/>
            <person name="Chen H."/>
            <person name="Cheuk R.F."/>
            <person name="Chin C.W."/>
            <person name="Chung M.K."/>
            <person name="Conn L."/>
            <person name="Conway A.B."/>
            <person name="Conway A.R."/>
            <person name="Creasy T.H."/>
            <person name="Dewar K."/>
            <person name="Dunn P."/>
            <person name="Etgu P."/>
            <person name="Feldblyum T.V."/>
            <person name="Feng J.-D."/>
            <person name="Fong B."/>
            <person name="Fujii C.Y."/>
            <person name="Gill J.E."/>
            <person name="Goldsmith A.D."/>
            <person name="Haas B."/>
            <person name="Hansen N.F."/>
            <person name="Hughes B."/>
            <person name="Huizar L."/>
            <person name="Hunter J.L."/>
            <person name="Jenkins J."/>
            <person name="Johnson-Hopson C."/>
            <person name="Khan S."/>
            <person name="Khaykin E."/>
            <person name="Kim C.J."/>
            <person name="Koo H.L."/>
            <person name="Kremenetskaia I."/>
            <person name="Kurtz D.B."/>
            <person name="Kwan A."/>
            <person name="Lam B."/>
            <person name="Langin-Hooper S."/>
            <person name="Lee A."/>
            <person name="Lee J.M."/>
            <person name="Lenz C.A."/>
            <person name="Li J.H."/>
            <person name="Li Y.-P."/>
            <person name="Lin X."/>
            <person name="Liu S.X."/>
            <person name="Liu Z.A."/>
            <person name="Luros J.S."/>
            <person name="Maiti R."/>
            <person name="Marziali A."/>
            <person name="Militscher J."/>
            <person name="Miranda M."/>
            <person name="Nguyen M."/>
            <person name="Nierman W.C."/>
            <person name="Osborne B.I."/>
            <person name="Pai G."/>
            <person name="Peterson J."/>
            <person name="Pham P.K."/>
            <person name="Rizzo M."/>
            <person name="Rooney T."/>
            <person name="Rowley D."/>
            <person name="Sakano H."/>
            <person name="Salzberg S.L."/>
            <person name="Schwartz J.R."/>
            <person name="Shinn P."/>
            <person name="Southwick A.M."/>
            <person name="Sun H."/>
            <person name="Tallon L.J."/>
            <person name="Tambunga G."/>
            <person name="Toriumi M.J."/>
            <person name="Town C.D."/>
            <person name="Utterback T."/>
            <person name="Van Aken S."/>
            <person name="Vaysberg M."/>
            <person name="Vysotskaia V.S."/>
            <person name="Walker M."/>
            <person name="Wu D."/>
            <person name="Yu G."/>
            <person name="Fraser C.M."/>
            <person name="Venter J.C."/>
            <person name="Davis R.W."/>
        </authorList>
    </citation>
    <scope>NUCLEOTIDE SEQUENCE [LARGE SCALE GENOMIC DNA]</scope>
    <source>
        <strain>cv. Columbia</strain>
    </source>
</reference>
<reference key="2">
    <citation type="journal article" date="2017" name="Plant J.">
        <title>Araport11: a complete reannotation of the Arabidopsis thaliana reference genome.</title>
        <authorList>
            <person name="Cheng C.Y."/>
            <person name="Krishnakumar V."/>
            <person name="Chan A.P."/>
            <person name="Thibaud-Nissen F."/>
            <person name="Schobel S."/>
            <person name="Town C.D."/>
        </authorList>
    </citation>
    <scope>GENOME REANNOTATION</scope>
    <source>
        <strain>cv. Columbia</strain>
    </source>
</reference>
<reference key="3">
    <citation type="journal article" date="2003" name="Science">
        <title>Empirical analysis of transcriptional activity in the Arabidopsis genome.</title>
        <authorList>
            <person name="Yamada K."/>
            <person name="Lim J."/>
            <person name="Dale J.M."/>
            <person name="Chen H."/>
            <person name="Shinn P."/>
            <person name="Palm C.J."/>
            <person name="Southwick A.M."/>
            <person name="Wu H.C."/>
            <person name="Kim C.J."/>
            <person name="Nguyen M."/>
            <person name="Pham P.K."/>
            <person name="Cheuk R.F."/>
            <person name="Karlin-Newmann G."/>
            <person name="Liu S.X."/>
            <person name="Lam B."/>
            <person name="Sakano H."/>
            <person name="Wu T."/>
            <person name="Yu G."/>
            <person name="Miranda M."/>
            <person name="Quach H.L."/>
            <person name="Tripp M."/>
            <person name="Chang C.H."/>
            <person name="Lee J.M."/>
            <person name="Toriumi M.J."/>
            <person name="Chan M.M."/>
            <person name="Tang C.C."/>
            <person name="Onodera C.S."/>
            <person name="Deng J.M."/>
            <person name="Akiyama K."/>
            <person name="Ansari Y."/>
            <person name="Arakawa T."/>
            <person name="Banh J."/>
            <person name="Banno F."/>
            <person name="Bowser L."/>
            <person name="Brooks S.Y."/>
            <person name="Carninci P."/>
            <person name="Chao Q."/>
            <person name="Choy N."/>
            <person name="Enju A."/>
            <person name="Goldsmith A.D."/>
            <person name="Gurjal M."/>
            <person name="Hansen N.F."/>
            <person name="Hayashizaki Y."/>
            <person name="Johnson-Hopson C."/>
            <person name="Hsuan V.W."/>
            <person name="Iida K."/>
            <person name="Karnes M."/>
            <person name="Khan S."/>
            <person name="Koesema E."/>
            <person name="Ishida J."/>
            <person name="Jiang P.X."/>
            <person name="Jones T."/>
            <person name="Kawai J."/>
            <person name="Kamiya A."/>
            <person name="Meyers C."/>
            <person name="Nakajima M."/>
            <person name="Narusaka M."/>
            <person name="Seki M."/>
            <person name="Sakurai T."/>
            <person name="Satou M."/>
            <person name="Tamse R."/>
            <person name="Vaysberg M."/>
            <person name="Wallender E.K."/>
            <person name="Wong C."/>
            <person name="Yamamura Y."/>
            <person name="Yuan S."/>
            <person name="Shinozaki K."/>
            <person name="Davis R.W."/>
            <person name="Theologis A."/>
            <person name="Ecker J.R."/>
        </authorList>
    </citation>
    <scope>NUCLEOTIDE SEQUENCE [LARGE SCALE MRNA] (ISOFORM 2)</scope>
    <source>
        <strain>cv. Columbia</strain>
    </source>
</reference>
<reference key="4">
    <citation type="journal article" date="2005" name="Plant Cell Physiol.">
        <title>An Arabidopsis protein with a novel calcium-binding repeat sequence interacts with TONSOKU/MGOUN3/BRUSHY1 involved in meristem maintenance.</title>
        <authorList>
            <person name="Suzuki T."/>
            <person name="Nakajima S."/>
            <person name="Morikami A."/>
            <person name="Nakamura K."/>
        </authorList>
    </citation>
    <scope>INTERACTION WITH TSK</scope>
    <scope>ALTERNATIVE SPLICING</scope>
    <scope>TISSUE SPECIFICITY</scope>
    <scope>CALCIUM-BINDING</scope>
    <scope>SUBUNIT</scope>
    <scope>SUBCELLULAR LOCATION</scope>
</reference>
<reference key="5">
    <citation type="journal article" date="2007" name="Plant Cell">
        <title>Proteome analysis of Arabidopsis leaf peroxisomes reveals novel targeting peptides, metabolic pathways, and defense mechanisms.</title>
        <authorList>
            <person name="Reumann S."/>
            <person name="Babujee L."/>
            <person name="Ma C."/>
            <person name="Wienkoop S."/>
            <person name="Siemsen T."/>
            <person name="Antonicelli G.E."/>
            <person name="Rasche N."/>
            <person name="Lueder F."/>
            <person name="Weckwerth W."/>
            <person name="Jahn O."/>
        </authorList>
    </citation>
    <scope>IDENTIFICATION BY MASS SPECTROMETRY</scope>
</reference>
<reference key="6">
    <citation type="journal article" date="2008" name="Plant Cell">
        <title>NAI2 is an endoplasmic reticulum body component that enables ER body formation in Arabidopsis thaliana.</title>
        <authorList>
            <person name="Yamada K."/>
            <person name="Nagano A.J."/>
            <person name="Nishina M."/>
            <person name="Hara-Nishimura I."/>
            <person name="Nishimura M."/>
        </authorList>
    </citation>
    <scope>IDENTIFICATION</scope>
    <scope>DOMAIN</scope>
    <source>
        <strain>cv. Columbia</strain>
    </source>
</reference>
<reference key="7">
    <citation type="journal article" date="2011" name="J. Genet. Genomics">
        <title>TSA1 interacts with CSN1/CSN and may be functionally involved in Arabidopsis seedling development in darkness.</title>
        <authorList>
            <person name="Li W."/>
            <person name="Zang B."/>
            <person name="Liu C."/>
            <person name="Lu L."/>
            <person name="Wei N."/>
            <person name="Cao K."/>
            <person name="Deng X.W."/>
            <person name="Wang X."/>
        </authorList>
    </citation>
    <scope>FUNCTION</scope>
    <scope>INTERACTION WITH CSN1</scope>
    <source>
        <strain>cv. Columbia</strain>
    </source>
</reference>
<reference key="8">
    <citation type="journal article" date="2011" name="Plant Cell Physiol.">
        <title>Unique defense strategy by the endoplasmic reticulum body in plants.</title>
        <authorList>
            <person name="Yamada K."/>
            <person name="Hara-Nishimura I."/>
            <person name="Nishimura M."/>
        </authorList>
    </citation>
    <scope>INDUCTION</scope>
</reference>
<reference key="9">
    <citation type="journal article" date="2013" name="Front. Plant Sci.">
        <title>The GIP gamma-tubulin complex-associated proteins are involved in nuclear architecture in Arabidopsis thaliana.</title>
        <authorList>
            <person name="Batzenschlager M."/>
            <person name="Masoud K."/>
            <person name="Janski N."/>
            <person name="Houlne G."/>
            <person name="Herzog E."/>
            <person name="Evrard J.L."/>
            <person name="Baumberger N."/>
            <person name="Erhardt M."/>
            <person name="Nomine Y."/>
            <person name="Kieffer B."/>
            <person name="Schmit A.C."/>
            <person name="Chaboute M.E."/>
        </authorList>
    </citation>
    <scope>FUNCTION</scope>
    <scope>INTERACTION WITH GIP1</scope>
    <scope>SUBCELLULAR LOCATION</scope>
</reference>
<evidence type="ECO:0000255" key="1"/>
<evidence type="ECO:0000256" key="2">
    <source>
        <dbReference type="SAM" id="MobiDB-lite"/>
    </source>
</evidence>
<evidence type="ECO:0000269" key="3">
    <source>
    </source>
</evidence>
<evidence type="ECO:0000269" key="4">
    <source>
    </source>
</evidence>
<evidence type="ECO:0000269" key="5">
    <source>
    </source>
</evidence>
<evidence type="ECO:0000269" key="6">
    <source>
    </source>
</evidence>
<evidence type="ECO:0000269" key="7">
    <source>
    </source>
</evidence>
<evidence type="ECO:0000303" key="8">
    <source>
    </source>
</evidence>
<evidence type="ECO:0000305" key="9"/>
<gene>
    <name type="primary">TSA1</name>
    <name type="ordered locus">At1g52410</name>
    <name type="ORF">F19K6.14</name>
</gene>
<accession>F4ICX9</accession>
<accession>F4ICY0</accession>
<accession>Q94AE1</accession>
<accession>Q9C831</accession>